<keyword id="KW-0002">3D-structure</keyword>
<keyword id="KW-0119">Carbohydrate metabolism</keyword>
<keyword id="KW-0963">Cytoplasm</keyword>
<keyword id="KW-0456">Lyase</keyword>
<keyword id="KW-1185">Reference proteome</keyword>
<keyword id="KW-0704">Schiff base</keyword>
<proteinExistence type="evidence at protein level"/>
<protein>
    <recommendedName>
        <fullName evidence="1 3">N-acetylneuraminate lyase</fullName>
        <shortName evidence="1">NAL</shortName>
        <shortName evidence="1">Neu5Ac lyase</shortName>
        <ecNumber evidence="1 2">4.1.3.3</ecNumber>
    </recommendedName>
    <alternativeName>
        <fullName evidence="1">N-acetylneuraminate pyruvate-lyase</fullName>
    </alternativeName>
    <alternativeName>
        <fullName evidence="1">N-acetylneuraminic acid aldolase</fullName>
    </alternativeName>
    <alternativeName>
        <fullName evidence="1">Sialate lyase</fullName>
    </alternativeName>
    <alternativeName>
        <fullName evidence="1">Sialic acid aldolase</fullName>
    </alternativeName>
    <alternativeName>
        <fullName evidence="1">Sialic acid lyase</fullName>
    </alternativeName>
</protein>
<organism>
    <name type="scientific">Fusobacterium nucleatum subsp. nucleatum (strain ATCC 25586 / DSM 15643 / BCRC 10681 / CIP 101130 / JCM 8532 / KCTC 2640 / LMG 13131 / VPI 4355)</name>
    <dbReference type="NCBI Taxonomy" id="190304"/>
    <lineage>
        <taxon>Bacteria</taxon>
        <taxon>Fusobacteriati</taxon>
        <taxon>Fusobacteriota</taxon>
        <taxon>Fusobacteriia</taxon>
        <taxon>Fusobacteriales</taxon>
        <taxon>Fusobacteriaceae</taxon>
        <taxon>Fusobacterium</taxon>
    </lineage>
</organism>
<comment type="function">
    <text evidence="1 2">Catalyzes the reversible aldol cleavage of N-acetylneuraminic acid (sialic acid; Neu5Ac) to form pyruvate and N-acetylmannosamine (ManNAc) via a Schiff base intermediate.</text>
</comment>
<comment type="catalytic activity">
    <reaction evidence="1 2">
        <text>aceneuramate = aldehydo-N-acetyl-D-mannosamine + pyruvate</text>
        <dbReference type="Rhea" id="RHEA:23296"/>
        <dbReference type="ChEBI" id="CHEBI:15361"/>
        <dbReference type="ChEBI" id="CHEBI:17122"/>
        <dbReference type="ChEBI" id="CHEBI:173083"/>
        <dbReference type="EC" id="4.1.3.3"/>
    </reaction>
</comment>
<comment type="biophysicochemical properties">
    <kinetics>
        <KM evidence="2">6 mM for N-acetylneuraminate</KM>
        <text evidence="2">kcat is 12.5 sec(-1).</text>
    </kinetics>
</comment>
<comment type="pathway">
    <text evidence="1">Amino-sugar metabolism; N-acetylneuraminate degradation; D-fructose 6-phosphate from N-acetylneuraminate: step 1/5.</text>
</comment>
<comment type="subunit">
    <text evidence="1 2">Homotetramer.</text>
</comment>
<comment type="subcellular location">
    <subcellularLocation>
        <location evidence="1">Cytoplasm</location>
    </subcellularLocation>
</comment>
<comment type="similarity">
    <text evidence="1">Belongs to the DapA family. NanA subfamily.</text>
</comment>
<feature type="chain" id="PRO_0000103213" description="N-acetylneuraminate lyase">
    <location>
        <begin position="1"/>
        <end position="290"/>
    </location>
</feature>
<feature type="active site" description="Proton donor" evidence="1">
    <location>
        <position position="133"/>
    </location>
</feature>
<feature type="active site" description="Schiff-base intermediate with substrate" evidence="1 4">
    <location>
        <position position="161"/>
    </location>
</feature>
<feature type="binding site" evidence="1">
    <location>
        <position position="44"/>
    </location>
    <ligand>
        <name>aceneuramate</name>
        <dbReference type="ChEBI" id="CHEBI:173083"/>
    </ligand>
</feature>
<feature type="binding site" evidence="1">
    <location>
        <position position="45"/>
    </location>
    <ligand>
        <name>aceneuramate</name>
        <dbReference type="ChEBI" id="CHEBI:173083"/>
    </ligand>
</feature>
<feature type="binding site" evidence="1">
    <location>
        <position position="163"/>
    </location>
    <ligand>
        <name>aceneuramate</name>
        <dbReference type="ChEBI" id="CHEBI:173083"/>
    </ligand>
</feature>
<feature type="binding site" evidence="1">
    <location>
        <position position="185"/>
    </location>
    <ligand>
        <name>aceneuramate</name>
        <dbReference type="ChEBI" id="CHEBI:173083"/>
    </ligand>
</feature>
<feature type="binding site" evidence="1">
    <location>
        <position position="187"/>
    </location>
    <ligand>
        <name>aceneuramate</name>
        <dbReference type="ChEBI" id="CHEBI:173083"/>
    </ligand>
</feature>
<feature type="binding site" evidence="1">
    <location>
        <position position="188"/>
    </location>
    <ligand>
        <name>aceneuramate</name>
        <dbReference type="ChEBI" id="CHEBI:173083"/>
    </ligand>
</feature>
<feature type="binding site" evidence="1">
    <location>
        <position position="204"/>
    </location>
    <ligand>
        <name>aceneuramate</name>
        <dbReference type="ChEBI" id="CHEBI:173083"/>
    </ligand>
</feature>
<feature type="strand" evidence="8">
    <location>
        <begin position="3"/>
        <end position="7"/>
    </location>
</feature>
<feature type="strand" evidence="8">
    <location>
        <begin position="16"/>
        <end position="18"/>
    </location>
</feature>
<feature type="helix" evidence="8">
    <location>
        <begin position="20"/>
        <end position="32"/>
    </location>
</feature>
<feature type="strand" evidence="8">
    <location>
        <begin position="37"/>
        <end position="41"/>
    </location>
</feature>
<feature type="helix" evidence="8">
    <location>
        <begin position="44"/>
        <end position="46"/>
    </location>
</feature>
<feature type="helix" evidence="8">
    <location>
        <begin position="48"/>
        <end position="50"/>
    </location>
</feature>
<feature type="helix" evidence="8">
    <location>
        <begin position="53"/>
        <end position="67"/>
    </location>
</feature>
<feature type="strand" evidence="8">
    <location>
        <begin position="70"/>
        <end position="76"/>
    </location>
</feature>
<feature type="helix" evidence="8">
    <location>
        <begin position="82"/>
        <end position="95"/>
    </location>
</feature>
<feature type="strand" evidence="8">
    <location>
        <begin position="100"/>
        <end position="103"/>
    </location>
</feature>
<feature type="strand" evidence="7">
    <location>
        <begin position="106"/>
        <end position="108"/>
    </location>
</feature>
<feature type="helix" evidence="8">
    <location>
        <begin position="112"/>
        <end position="126"/>
    </location>
</feature>
<feature type="strand" evidence="8">
    <location>
        <begin position="130"/>
        <end position="134"/>
    </location>
</feature>
<feature type="helix" evidence="8">
    <location>
        <begin position="136"/>
        <end position="139"/>
    </location>
</feature>
<feature type="helix" evidence="8">
    <location>
        <begin position="145"/>
        <end position="152"/>
    </location>
</feature>
<feature type="strand" evidence="8">
    <location>
        <begin position="157"/>
        <end position="162"/>
    </location>
</feature>
<feature type="helix" evidence="8">
    <location>
        <begin position="167"/>
        <end position="176"/>
    </location>
</feature>
<feature type="strand" evidence="8">
    <location>
        <begin position="180"/>
        <end position="184"/>
    </location>
</feature>
<feature type="helix" evidence="8">
    <location>
        <begin position="187"/>
        <end position="189"/>
    </location>
</feature>
<feature type="helix" evidence="8">
    <location>
        <begin position="190"/>
        <end position="195"/>
    </location>
</feature>
<feature type="strand" evidence="8">
    <location>
        <begin position="199"/>
        <end position="204"/>
    </location>
</feature>
<feature type="helix" evidence="8">
    <location>
        <begin position="206"/>
        <end position="220"/>
    </location>
</feature>
<feature type="turn" evidence="8">
    <location>
        <begin position="221"/>
        <end position="223"/>
    </location>
</feature>
<feature type="helix" evidence="8">
    <location>
        <begin position="225"/>
        <end position="245"/>
    </location>
</feature>
<feature type="helix" evidence="8">
    <location>
        <begin position="247"/>
        <end position="257"/>
    </location>
</feature>
<feature type="helix" evidence="8">
    <location>
        <begin position="274"/>
        <end position="287"/>
    </location>
</feature>
<sequence length="290" mass="32803">MKGIYSALMVPYNEDGSINEKGLREIIRYNIDKMKVDGLYVGGSTGENFMISTEEKKRVFEIAIDEAKDSVNLIAQVGSINLNEAVELGKYVTKLGYKCLSAVTPFYYKFDFSEIKDYYETIVRETGNYMIIYSIPFLTGVNMSLSQFGELFENEKIIGVKFTAGDFYLLERVRKAFPDKLIFAGFDEMLLPATVLGVDGAIGSTYNINGIRAKQIFELAKNSKIDEALKIQHTTNDLIEGILSNGLYQTIKEILKLEGVDAGYCRKPMKKISQKQIEFAKELHKKFLKN</sequence>
<gene>
    <name evidence="1 3" type="primary">nanA</name>
    <name type="ordered locus">FN1475</name>
</gene>
<dbReference type="EC" id="4.1.3.3" evidence="1 2"/>
<dbReference type="EMBL" id="AE009951">
    <property type="protein sequence ID" value="AAL95668.1"/>
    <property type="molecule type" value="Genomic_DNA"/>
</dbReference>
<dbReference type="RefSeq" id="NP_604369.1">
    <property type="nucleotide sequence ID" value="NC_003454.1"/>
</dbReference>
<dbReference type="RefSeq" id="WP_011017181.1">
    <property type="nucleotide sequence ID" value="NZ_OZ209243.1"/>
</dbReference>
<dbReference type="PDB" id="5ZJM">
    <property type="method" value="X-ray"/>
    <property type="resolution" value="2.32 A"/>
    <property type="chains" value="A/B/C/D=1-289"/>
</dbReference>
<dbReference type="PDB" id="5ZKA">
    <property type="method" value="X-ray"/>
    <property type="resolution" value="1.76 A"/>
    <property type="chains" value="A=1-290, B=1-289"/>
</dbReference>
<dbReference type="PDBsum" id="5ZJM"/>
<dbReference type="PDBsum" id="5ZKA"/>
<dbReference type="SMR" id="Q8RDN6"/>
<dbReference type="FunCoup" id="Q8RDN6">
    <property type="interactions" value="211"/>
</dbReference>
<dbReference type="STRING" id="190304.FN1475"/>
<dbReference type="PaxDb" id="190304-FN1475"/>
<dbReference type="EnsemblBacteria" id="AAL95668">
    <property type="protein sequence ID" value="AAL95668"/>
    <property type="gene ID" value="FN1475"/>
</dbReference>
<dbReference type="KEGG" id="fnu:FN1475"/>
<dbReference type="PATRIC" id="fig|190304.8.peg.2035"/>
<dbReference type="eggNOG" id="COG0329">
    <property type="taxonomic scope" value="Bacteria"/>
</dbReference>
<dbReference type="HOGENOM" id="CLU_049343_6_0_0"/>
<dbReference type="InParanoid" id="Q8RDN6"/>
<dbReference type="BioCyc" id="FNUC190304:G1FZS-2043-MONOMER"/>
<dbReference type="UniPathway" id="UPA00629">
    <property type="reaction ID" value="UER00680"/>
</dbReference>
<dbReference type="Proteomes" id="UP000002521">
    <property type="component" value="Chromosome"/>
</dbReference>
<dbReference type="GO" id="GO:0005829">
    <property type="term" value="C:cytosol"/>
    <property type="evidence" value="ECO:0000318"/>
    <property type="project" value="GO_Central"/>
</dbReference>
<dbReference type="GO" id="GO:0008747">
    <property type="term" value="F:N-acetylneuraminate lyase activity"/>
    <property type="evidence" value="ECO:0000318"/>
    <property type="project" value="GO_Central"/>
</dbReference>
<dbReference type="GO" id="GO:0005975">
    <property type="term" value="P:carbohydrate metabolic process"/>
    <property type="evidence" value="ECO:0007669"/>
    <property type="project" value="UniProtKB-UniRule"/>
</dbReference>
<dbReference type="GO" id="GO:0019262">
    <property type="term" value="P:N-acetylneuraminate catabolic process"/>
    <property type="evidence" value="ECO:0000318"/>
    <property type="project" value="GO_Central"/>
</dbReference>
<dbReference type="CDD" id="cd00954">
    <property type="entry name" value="NAL"/>
    <property type="match status" value="1"/>
</dbReference>
<dbReference type="FunFam" id="3.20.20.70:FF:000039">
    <property type="entry name" value="N-acetylneuraminate lyase"/>
    <property type="match status" value="1"/>
</dbReference>
<dbReference type="Gene3D" id="3.20.20.70">
    <property type="entry name" value="Aldolase class I"/>
    <property type="match status" value="1"/>
</dbReference>
<dbReference type="HAMAP" id="MF_01237">
    <property type="entry name" value="N_acetylneuram_lyase"/>
    <property type="match status" value="1"/>
</dbReference>
<dbReference type="InterPro" id="IPR013785">
    <property type="entry name" value="Aldolase_TIM"/>
</dbReference>
<dbReference type="InterPro" id="IPR002220">
    <property type="entry name" value="DapA-like"/>
</dbReference>
<dbReference type="InterPro" id="IPR005264">
    <property type="entry name" value="NanA"/>
</dbReference>
<dbReference type="InterPro" id="IPR020625">
    <property type="entry name" value="Schiff_base-form_aldolases_AS"/>
</dbReference>
<dbReference type="InterPro" id="IPR020624">
    <property type="entry name" value="Schiff_base-form_aldolases_CS"/>
</dbReference>
<dbReference type="NCBIfam" id="TIGR00683">
    <property type="entry name" value="nanA"/>
    <property type="match status" value="1"/>
</dbReference>
<dbReference type="NCBIfam" id="NF003164">
    <property type="entry name" value="PRK04147.1"/>
    <property type="match status" value="1"/>
</dbReference>
<dbReference type="PANTHER" id="PTHR42849">
    <property type="entry name" value="N-ACETYLNEURAMINATE LYASE"/>
    <property type="match status" value="1"/>
</dbReference>
<dbReference type="PANTHER" id="PTHR42849:SF1">
    <property type="entry name" value="N-ACETYLNEURAMINATE LYASE"/>
    <property type="match status" value="1"/>
</dbReference>
<dbReference type="Pfam" id="PF00701">
    <property type="entry name" value="DHDPS"/>
    <property type="match status" value="1"/>
</dbReference>
<dbReference type="PIRSF" id="PIRSF001365">
    <property type="entry name" value="DHDPS"/>
    <property type="match status" value="1"/>
</dbReference>
<dbReference type="PRINTS" id="PR00146">
    <property type="entry name" value="DHPICSNTHASE"/>
</dbReference>
<dbReference type="SMART" id="SM01130">
    <property type="entry name" value="DHDPS"/>
    <property type="match status" value="1"/>
</dbReference>
<dbReference type="SUPFAM" id="SSF51569">
    <property type="entry name" value="Aldolase"/>
    <property type="match status" value="1"/>
</dbReference>
<dbReference type="PROSITE" id="PS00665">
    <property type="entry name" value="DHDPS_1"/>
    <property type="match status" value="1"/>
</dbReference>
<dbReference type="PROSITE" id="PS00666">
    <property type="entry name" value="DHDPS_2"/>
    <property type="match status" value="1"/>
</dbReference>
<reference key="1">
    <citation type="journal article" date="2002" name="J. Bacteriol.">
        <title>Genome sequence and analysis of the oral bacterium Fusobacterium nucleatum strain ATCC 25586.</title>
        <authorList>
            <person name="Kapatral V."/>
            <person name="Anderson I."/>
            <person name="Ivanova N."/>
            <person name="Reznik G."/>
            <person name="Los T."/>
            <person name="Lykidis A."/>
            <person name="Bhattacharyya A."/>
            <person name="Bartman A."/>
            <person name="Gardner W."/>
            <person name="Grechkin G."/>
            <person name="Zhu L."/>
            <person name="Vasieva O."/>
            <person name="Chu L."/>
            <person name="Kogan Y."/>
            <person name="Chaga O."/>
            <person name="Goltsman E."/>
            <person name="Bernal A."/>
            <person name="Larsen N."/>
            <person name="D'Souza M."/>
            <person name="Walunas T."/>
            <person name="Pusch G."/>
            <person name="Haselkorn R."/>
            <person name="Fonstein M."/>
            <person name="Kyrpides N.C."/>
            <person name="Overbeek R."/>
        </authorList>
    </citation>
    <scope>NUCLEOTIDE SEQUENCE [LARGE SCALE GENOMIC DNA]</scope>
    <source>
        <strain>ATCC 25586 / DSM 15643 / BCRC 10681 / CIP 101130 / JCM 8532 / KCTC 2640 / LMG 13131 / VPI 4355</strain>
    </source>
</reference>
<reference evidence="5 6" key="2">
    <citation type="journal article" date="2018" name="Acta Crystallogr. F Struct. Biol. Commun.">
        <title>Crystal structures and kinetics of N-acetylneuraminate lyase from Fusobacterium nucleatum.</title>
        <authorList>
            <person name="Kumar J.P."/>
            <person name="Rao H."/>
            <person name="Nayak V."/>
            <person name="Ramaswamy S."/>
        </authorList>
    </citation>
    <scope>X-RAY CRYSTALLOGRAPHY (1.76 ANGSTROMS) OF 1-289</scope>
    <scope>FUNCTION</scope>
    <scope>CATALYTIC ACTIVITY</scope>
    <scope>BIOPHYSICOCHEMICAL PROPERTIES</scope>
    <scope>SUBUNIT</scope>
    <scope>ACTIVE SITE</scope>
    <source>
        <strain>ATCC 25586 / DSM 15643 / BCRC 10681 / CIP 101130 / JCM 8532 / KCTC 2640 / LMG 13131 / VPI 4355</strain>
    </source>
</reference>
<evidence type="ECO:0000255" key="1">
    <source>
        <dbReference type="HAMAP-Rule" id="MF_01237"/>
    </source>
</evidence>
<evidence type="ECO:0000269" key="2">
    <source>
    </source>
</evidence>
<evidence type="ECO:0000303" key="3">
    <source>
    </source>
</evidence>
<evidence type="ECO:0000305" key="4">
    <source>
    </source>
</evidence>
<evidence type="ECO:0007744" key="5">
    <source>
        <dbReference type="PDB" id="5ZJM"/>
    </source>
</evidence>
<evidence type="ECO:0007744" key="6">
    <source>
        <dbReference type="PDB" id="5ZKA"/>
    </source>
</evidence>
<evidence type="ECO:0007829" key="7">
    <source>
        <dbReference type="PDB" id="5ZJM"/>
    </source>
</evidence>
<evidence type="ECO:0007829" key="8">
    <source>
        <dbReference type="PDB" id="5ZKA"/>
    </source>
</evidence>
<accession>Q8RDN6</accession>
<name>NANA_FUSNN</name>